<evidence type="ECO:0000255" key="1">
    <source>
        <dbReference type="HAMAP-Rule" id="MF_01856"/>
    </source>
</evidence>
<evidence type="ECO:0000305" key="2"/>
<comment type="function">
    <text evidence="1">Specifically methylates the cytosine at position 967 (m5C967) of 16S rRNA.</text>
</comment>
<comment type="catalytic activity">
    <reaction evidence="1">
        <text>cytidine(967) in 16S rRNA + S-adenosyl-L-methionine = 5-methylcytidine(967) in 16S rRNA + S-adenosyl-L-homocysteine + H(+)</text>
        <dbReference type="Rhea" id="RHEA:42748"/>
        <dbReference type="Rhea" id="RHEA-COMP:10219"/>
        <dbReference type="Rhea" id="RHEA-COMP:10220"/>
        <dbReference type="ChEBI" id="CHEBI:15378"/>
        <dbReference type="ChEBI" id="CHEBI:57856"/>
        <dbReference type="ChEBI" id="CHEBI:59789"/>
        <dbReference type="ChEBI" id="CHEBI:74483"/>
        <dbReference type="ChEBI" id="CHEBI:82748"/>
        <dbReference type="EC" id="2.1.1.176"/>
    </reaction>
</comment>
<comment type="subcellular location">
    <subcellularLocation>
        <location evidence="1">Cytoplasm</location>
    </subcellularLocation>
</comment>
<comment type="similarity">
    <text evidence="1">Belongs to the class I-like SAM-binding methyltransferase superfamily. RsmB/NOP family.</text>
</comment>
<comment type="sequence caution" evidence="2">
    <conflict type="erroneous initiation">
        <sequence resource="EMBL-CDS" id="ABX87362"/>
    </conflict>
</comment>
<name>RSMB_YERPG</name>
<proteinExistence type="inferred from homology"/>
<accession>A9R925</accession>
<sequence>MKNTYNLRSIAAKAISQVLDQGQSLSAVLPELQKNISDKDRALLQELCFGTLRVLPQLEWCIQQLMARPMTGKQRVFHYLIMVGLYQLIYTRIPPHAALAETVEGATVLKRPQLKGLINGVLRQFQRQQVELLERAVNNDSHYLHPSWLLARIKQAYPAQWQQILDANNQRPPMWLRVNRQHHSRSEYLELLTQADINAEPHPIYRDAVRLITPCAVNHLPGFELGWVTVQDASAQGCVDLLDPQNGEQILDLCAAPGGKTTHILEAAPKAHVLAVDIDEQRLSRVKENLQRLQLQAVVRVGDGRAPDTWCGDQQFDRILLDAPCSATGVIRRHPDIKWLRRDRDISELAQLQSEIIEAIWPKLKHGGVLVYATCSILPEENQQQIAAFLQRHPEAQLTETGTTAAPGKQNLPHPEDGDGFFYAKIIKK</sequence>
<feature type="chain" id="PRO_0000366184" description="Ribosomal RNA small subunit methyltransferase B">
    <location>
        <begin position="1"/>
        <end position="429"/>
    </location>
</feature>
<feature type="active site" description="Nucleophile" evidence="1">
    <location>
        <position position="375"/>
    </location>
</feature>
<feature type="binding site" evidence="1">
    <location>
        <begin position="254"/>
        <end position="260"/>
    </location>
    <ligand>
        <name>S-adenosyl-L-methionine</name>
        <dbReference type="ChEBI" id="CHEBI:59789"/>
    </ligand>
</feature>
<feature type="binding site" evidence="1">
    <location>
        <position position="277"/>
    </location>
    <ligand>
        <name>S-adenosyl-L-methionine</name>
        <dbReference type="ChEBI" id="CHEBI:59789"/>
    </ligand>
</feature>
<feature type="binding site" evidence="1">
    <location>
        <position position="303"/>
    </location>
    <ligand>
        <name>S-adenosyl-L-methionine</name>
        <dbReference type="ChEBI" id="CHEBI:59789"/>
    </ligand>
</feature>
<feature type="binding site" evidence="1">
    <location>
        <position position="322"/>
    </location>
    <ligand>
        <name>S-adenosyl-L-methionine</name>
        <dbReference type="ChEBI" id="CHEBI:59789"/>
    </ligand>
</feature>
<organism>
    <name type="scientific">Yersinia pestis bv. Antiqua (strain Angola)</name>
    <dbReference type="NCBI Taxonomy" id="349746"/>
    <lineage>
        <taxon>Bacteria</taxon>
        <taxon>Pseudomonadati</taxon>
        <taxon>Pseudomonadota</taxon>
        <taxon>Gammaproteobacteria</taxon>
        <taxon>Enterobacterales</taxon>
        <taxon>Yersiniaceae</taxon>
        <taxon>Yersinia</taxon>
    </lineage>
</organism>
<protein>
    <recommendedName>
        <fullName evidence="1">Ribosomal RNA small subunit methyltransferase B</fullName>
        <ecNumber evidence="1">2.1.1.176</ecNumber>
    </recommendedName>
    <alternativeName>
        <fullName evidence="1">16S rRNA m5C967 methyltransferase</fullName>
    </alternativeName>
    <alternativeName>
        <fullName evidence="1">rRNA (cytosine-C(5)-)-methyltransferase RsmB</fullName>
    </alternativeName>
</protein>
<keyword id="KW-0963">Cytoplasm</keyword>
<keyword id="KW-0489">Methyltransferase</keyword>
<keyword id="KW-0694">RNA-binding</keyword>
<keyword id="KW-0698">rRNA processing</keyword>
<keyword id="KW-0949">S-adenosyl-L-methionine</keyword>
<keyword id="KW-0808">Transferase</keyword>
<gene>
    <name evidence="1" type="primary">rsmB</name>
    <name evidence="1" type="synonym">sun</name>
    <name type="ordered locus">YpAngola_A0613</name>
</gene>
<reference key="1">
    <citation type="journal article" date="2010" name="J. Bacteriol.">
        <title>Genome sequence of the deep-rooted Yersinia pestis strain Angola reveals new insights into the evolution and pangenome of the plague bacterium.</title>
        <authorList>
            <person name="Eppinger M."/>
            <person name="Worsham P.L."/>
            <person name="Nikolich M.P."/>
            <person name="Riley D.R."/>
            <person name="Sebastian Y."/>
            <person name="Mou S."/>
            <person name="Achtman M."/>
            <person name="Lindler L.E."/>
            <person name="Ravel J."/>
        </authorList>
    </citation>
    <scope>NUCLEOTIDE SEQUENCE [LARGE SCALE GENOMIC DNA]</scope>
    <source>
        <strain>Angola</strain>
    </source>
</reference>
<dbReference type="EC" id="2.1.1.176" evidence="1"/>
<dbReference type="EMBL" id="CP000901">
    <property type="protein sequence ID" value="ABX87362.1"/>
    <property type="status" value="ALT_INIT"/>
    <property type="molecule type" value="Genomic_DNA"/>
</dbReference>
<dbReference type="RefSeq" id="WP_041854762.1">
    <property type="nucleotide sequence ID" value="NC_010159.1"/>
</dbReference>
<dbReference type="SMR" id="A9R925"/>
<dbReference type="KEGG" id="ypg:YpAngola_A0613"/>
<dbReference type="PATRIC" id="fig|349746.12.peg.1565"/>
<dbReference type="GO" id="GO:0005829">
    <property type="term" value="C:cytosol"/>
    <property type="evidence" value="ECO:0007669"/>
    <property type="project" value="TreeGrafter"/>
</dbReference>
<dbReference type="GO" id="GO:0003723">
    <property type="term" value="F:RNA binding"/>
    <property type="evidence" value="ECO:0007669"/>
    <property type="project" value="UniProtKB-KW"/>
</dbReference>
<dbReference type="GO" id="GO:0009383">
    <property type="term" value="F:rRNA (cytosine-C5-)-methyltransferase activity"/>
    <property type="evidence" value="ECO:0007669"/>
    <property type="project" value="TreeGrafter"/>
</dbReference>
<dbReference type="GO" id="GO:0006355">
    <property type="term" value="P:regulation of DNA-templated transcription"/>
    <property type="evidence" value="ECO:0007669"/>
    <property type="project" value="InterPro"/>
</dbReference>
<dbReference type="GO" id="GO:0070475">
    <property type="term" value="P:rRNA base methylation"/>
    <property type="evidence" value="ECO:0007669"/>
    <property type="project" value="TreeGrafter"/>
</dbReference>
<dbReference type="CDD" id="cd02440">
    <property type="entry name" value="AdoMet_MTases"/>
    <property type="match status" value="1"/>
</dbReference>
<dbReference type="CDD" id="cd00620">
    <property type="entry name" value="Methyltransferase_Sun"/>
    <property type="match status" value="1"/>
</dbReference>
<dbReference type="FunFam" id="1.10.287.730:FF:000001">
    <property type="entry name" value="Ribosomal RNA small subunit methyltransferase B"/>
    <property type="match status" value="1"/>
</dbReference>
<dbReference type="FunFam" id="1.10.940.10:FF:000002">
    <property type="entry name" value="Ribosomal RNA small subunit methyltransferase B"/>
    <property type="match status" value="1"/>
</dbReference>
<dbReference type="FunFam" id="3.30.70.1170:FF:000002">
    <property type="entry name" value="Ribosomal RNA small subunit methyltransferase B"/>
    <property type="match status" value="1"/>
</dbReference>
<dbReference type="FunFam" id="3.40.50.150:FF:000022">
    <property type="entry name" value="Ribosomal RNA small subunit methyltransferase B"/>
    <property type="match status" value="1"/>
</dbReference>
<dbReference type="Gene3D" id="1.10.287.730">
    <property type="entry name" value="Helix hairpin bin"/>
    <property type="match status" value="1"/>
</dbReference>
<dbReference type="Gene3D" id="1.10.940.10">
    <property type="entry name" value="NusB-like"/>
    <property type="match status" value="1"/>
</dbReference>
<dbReference type="Gene3D" id="3.30.70.1170">
    <property type="entry name" value="Sun protein, domain 3"/>
    <property type="match status" value="1"/>
</dbReference>
<dbReference type="Gene3D" id="3.40.50.150">
    <property type="entry name" value="Vaccinia Virus protein VP39"/>
    <property type="match status" value="1"/>
</dbReference>
<dbReference type="HAMAP" id="MF_01856">
    <property type="entry name" value="16SrRNA_methyltr_B"/>
    <property type="match status" value="1"/>
</dbReference>
<dbReference type="InterPro" id="IPR049560">
    <property type="entry name" value="MeTrfase_RsmB-F_NOP2_cat"/>
</dbReference>
<dbReference type="InterPro" id="IPR001678">
    <property type="entry name" value="MeTrfase_RsmB-F_NOP2_dom"/>
</dbReference>
<dbReference type="InterPro" id="IPR035926">
    <property type="entry name" value="NusB-like_sf"/>
</dbReference>
<dbReference type="InterPro" id="IPR006027">
    <property type="entry name" value="NusB_RsmB_TIM44"/>
</dbReference>
<dbReference type="InterPro" id="IPR023267">
    <property type="entry name" value="RCMT"/>
</dbReference>
<dbReference type="InterPro" id="IPR004573">
    <property type="entry name" value="rRNA_ssu_MeTfrase_B"/>
</dbReference>
<dbReference type="InterPro" id="IPR023541">
    <property type="entry name" value="rRNA_ssu_MeTfrase_B_ent"/>
</dbReference>
<dbReference type="InterPro" id="IPR054728">
    <property type="entry name" value="RsmB-like_ferredoxin"/>
</dbReference>
<dbReference type="InterPro" id="IPR048019">
    <property type="entry name" value="RsmB-like_N"/>
</dbReference>
<dbReference type="InterPro" id="IPR018314">
    <property type="entry name" value="RsmB/NOL1/NOP2-like_CS"/>
</dbReference>
<dbReference type="InterPro" id="IPR029063">
    <property type="entry name" value="SAM-dependent_MTases_sf"/>
</dbReference>
<dbReference type="NCBIfam" id="NF008149">
    <property type="entry name" value="PRK10901.1"/>
    <property type="match status" value="1"/>
</dbReference>
<dbReference type="NCBIfam" id="NF011494">
    <property type="entry name" value="PRK14902.1"/>
    <property type="match status" value="1"/>
</dbReference>
<dbReference type="NCBIfam" id="TIGR00563">
    <property type="entry name" value="rsmB"/>
    <property type="match status" value="1"/>
</dbReference>
<dbReference type="PANTHER" id="PTHR22807:SF61">
    <property type="entry name" value="NOL1_NOP2_SUN FAMILY PROTEIN _ ANTITERMINATION NUSB DOMAIN-CONTAINING PROTEIN"/>
    <property type="match status" value="1"/>
</dbReference>
<dbReference type="PANTHER" id="PTHR22807">
    <property type="entry name" value="NOP2 YEAST -RELATED NOL1/NOP2/FMU SUN DOMAIN-CONTAINING"/>
    <property type="match status" value="1"/>
</dbReference>
<dbReference type="Pfam" id="PF01189">
    <property type="entry name" value="Methyltr_RsmB-F"/>
    <property type="match status" value="1"/>
</dbReference>
<dbReference type="Pfam" id="PF01029">
    <property type="entry name" value="NusB"/>
    <property type="match status" value="1"/>
</dbReference>
<dbReference type="Pfam" id="PF22458">
    <property type="entry name" value="RsmF-B_ferredox"/>
    <property type="match status" value="1"/>
</dbReference>
<dbReference type="PRINTS" id="PR02008">
    <property type="entry name" value="RCMTFAMILY"/>
</dbReference>
<dbReference type="SUPFAM" id="SSF48013">
    <property type="entry name" value="NusB-like"/>
    <property type="match status" value="1"/>
</dbReference>
<dbReference type="SUPFAM" id="SSF53335">
    <property type="entry name" value="S-adenosyl-L-methionine-dependent methyltransferases"/>
    <property type="match status" value="1"/>
</dbReference>
<dbReference type="PROSITE" id="PS01153">
    <property type="entry name" value="NOL1_NOP2_SUN"/>
    <property type="match status" value="1"/>
</dbReference>
<dbReference type="PROSITE" id="PS51686">
    <property type="entry name" value="SAM_MT_RSMB_NOP"/>
    <property type="match status" value="1"/>
</dbReference>